<sequence length="882" mass="100284">MAVRSRRPWMSVALGLVLGFTAASWLIAPRVAELSERKRRGSSLCSYYGRSAAGPRAGAQQPLPQPQSRPRQEQSPPPARQDLQGPPLPEAAPGITSFRSSPWQQPPPLQQRRRGREPEGATGLPGAPAAEGEPEEEDGGAAGQRRDGRPGSSHNGSGDGGAAAPSARPRDFLYVGVMTAQKYLGSRALAAQRTWARFIPGRVEFFSSQQPPNAGQPPPPLPVIALPGVDDSYPPQKKSFMMIKYMHDHYLDKYEWFMRADDDVYIKGDKLEEFLRSLNSSKPLYLGQTGLGNIEELGKLGLEPGENFCMGGPGMIFSREVLRRMVPHIGECLREMYTTHEDVEVGRCVRRFGGTQCVWSYEMQQLFHENYEHNRKGYIQDLHNSKIHAAITLHPNKRPAYQYRLHNYMLSRKISELRYRTIQLHRESALMSKLSNTEVSKEDQQLGVIPSFNHFQPRERNEVIEWEFLTGKLLYSAAENQPPRQSLSSILRTALDDTVLQVMEMINENAKSRGRLIDFKEIQYGYRRVNPMHGVEYILDLLLLYKRHKGRKLTVPVRRHAYLQQLFSKPFFRETEELDVNSLVESINSETQSFSFISNSLKILSSFQGAKEMGGHNEKKVHILVPLIGRYDIFLRFMENFENMCLIPKQNVKLVIILFSRDSGQDSSKHIELIKGYQNKYPKAEMTLIPMKGEFSRGLGLEMASAQFDNDTLLLFCDVDLIFREDFLQRCRDNTIQGQQVYYPIIFSQYDPKVTNGGNPPTDDYFIFSKKTGFWRDYGYGITCIYKSDLLGAGGFDTSIQGWGLEDVDLYNKVILSGLRPFRSQEVGVVHIFHPVHCDPNLDPKQYKMCLGSKASTFASTMQLAELWLEKHLGVRYNRTLS</sequence>
<proteinExistence type="evidence at protein level"/>
<gene>
    <name type="primary">CHSY3</name>
    <name type="synonym">CHSY2</name>
    <name type="synonym">CSS3</name>
</gene>
<name>CHSS3_HUMAN</name>
<organism>
    <name type="scientific">Homo sapiens</name>
    <name type="common">Human</name>
    <dbReference type="NCBI Taxonomy" id="9606"/>
    <lineage>
        <taxon>Eukaryota</taxon>
        <taxon>Metazoa</taxon>
        <taxon>Chordata</taxon>
        <taxon>Craniata</taxon>
        <taxon>Vertebrata</taxon>
        <taxon>Euteleostomi</taxon>
        <taxon>Mammalia</taxon>
        <taxon>Eutheria</taxon>
        <taxon>Euarchontoglires</taxon>
        <taxon>Primates</taxon>
        <taxon>Haplorrhini</taxon>
        <taxon>Catarrhini</taxon>
        <taxon>Hominidae</taxon>
        <taxon>Homo</taxon>
    </lineage>
</organism>
<keyword id="KW-0325">Glycoprotein</keyword>
<keyword id="KW-0333">Golgi apparatus</keyword>
<keyword id="KW-0472">Membrane</keyword>
<keyword id="KW-0479">Metal-binding</keyword>
<keyword id="KW-1267">Proteomics identification</keyword>
<keyword id="KW-1185">Reference proteome</keyword>
<keyword id="KW-0735">Signal-anchor</keyword>
<keyword id="KW-0808">Transferase</keyword>
<keyword id="KW-0812">Transmembrane</keyword>
<keyword id="KW-1133">Transmembrane helix</keyword>
<reference key="1">
    <citation type="journal article" date="2003" name="J. Biol. Chem.">
        <title>Chondroitin sulfate synthase-3. Molecular cloning and characterization.</title>
        <authorList>
            <person name="Yada T."/>
            <person name="Sato T."/>
            <person name="Kaseyama H."/>
            <person name="Gotoh M."/>
            <person name="Iwasaki H."/>
            <person name="Kikuchi N."/>
            <person name="Kwon Y.-D."/>
            <person name="Togayachi A."/>
            <person name="Kudo T."/>
            <person name="Watanabe H."/>
            <person name="Narimatsu H."/>
            <person name="Kimata K."/>
        </authorList>
    </citation>
    <scope>NUCLEOTIDE SEQUENCE [MRNA]</scope>
    <scope>FUNCTION</scope>
    <scope>SUBCELLULAR LOCATION</scope>
    <scope>COFACTOR</scope>
    <scope>TISSUE SPECIFICITY</scope>
</reference>
<reference key="2">
    <citation type="submission" date="2004-02" db="EMBL/GenBank/DDBJ databases">
        <title>A novel gene for chondroitin synthase in 5q23.3.</title>
        <authorList>
            <person name="Kamakari S."/>
            <person name="Chatzidakis I."/>
            <person name="Anagnou N."/>
        </authorList>
    </citation>
    <scope>NUCLEOTIDE SEQUENCE [MRNA]</scope>
    <source>
        <tissue>Pancreas</tissue>
        <tissue>Placenta</tissue>
    </source>
</reference>
<reference key="3">
    <citation type="journal article" date="2004" name="Genome Res.">
        <title>The status, quality, and expansion of the NIH full-length cDNA project: the Mammalian Gene Collection (MGC).</title>
        <authorList>
            <consortium name="The MGC Project Team"/>
        </authorList>
    </citation>
    <scope>NUCLEOTIDE SEQUENCE [LARGE SCALE MRNA]</scope>
</reference>
<dbReference type="EC" id="2.4.1.175"/>
<dbReference type="EC" id="2.4.1.226"/>
<dbReference type="EMBL" id="AB086062">
    <property type="protein sequence ID" value="BAC98832.1"/>
    <property type="molecule type" value="mRNA"/>
</dbReference>
<dbReference type="EMBL" id="AJ504664">
    <property type="protein sequence ID" value="CAD43233.1"/>
    <property type="status" value="ALT_INIT"/>
    <property type="molecule type" value="mRNA"/>
</dbReference>
<dbReference type="EMBL" id="AJ578034">
    <property type="protein sequence ID" value="CAE17326.1"/>
    <property type="molecule type" value="mRNA"/>
</dbReference>
<dbReference type="EMBL" id="BC137325">
    <property type="protein sequence ID" value="AAI37326.1"/>
    <property type="molecule type" value="mRNA"/>
</dbReference>
<dbReference type="CCDS" id="CCDS34223.1"/>
<dbReference type="RefSeq" id="NP_787052.3">
    <property type="nucleotide sequence ID" value="NM_175856.4"/>
</dbReference>
<dbReference type="SMR" id="Q70JA7"/>
<dbReference type="BioGRID" id="130623">
    <property type="interactions" value="38"/>
</dbReference>
<dbReference type="FunCoup" id="Q70JA7">
    <property type="interactions" value="645"/>
</dbReference>
<dbReference type="IntAct" id="Q70JA7">
    <property type="interactions" value="33"/>
</dbReference>
<dbReference type="MINT" id="Q70JA7"/>
<dbReference type="STRING" id="9606.ENSP00000302629"/>
<dbReference type="CAZy" id="GT31">
    <property type="family name" value="Glycosyltransferase Family 31"/>
</dbReference>
<dbReference type="CAZy" id="GT7">
    <property type="family name" value="Glycosyltransferase Family 7"/>
</dbReference>
<dbReference type="GlyCosmos" id="Q70JA7">
    <property type="glycosylation" value="6 sites, 1 glycan"/>
</dbReference>
<dbReference type="GlyGen" id="Q70JA7">
    <property type="glycosylation" value="9 sites, 2 N-linked glycans (2 sites), 2 O-linked glycans (5 sites)"/>
</dbReference>
<dbReference type="iPTMnet" id="Q70JA7"/>
<dbReference type="PhosphoSitePlus" id="Q70JA7"/>
<dbReference type="BioMuta" id="CHSY3"/>
<dbReference type="DMDM" id="145559453"/>
<dbReference type="jPOST" id="Q70JA7"/>
<dbReference type="MassIVE" id="Q70JA7"/>
<dbReference type="PaxDb" id="9606-ENSP00000302629"/>
<dbReference type="PeptideAtlas" id="Q70JA7"/>
<dbReference type="ProteomicsDB" id="68561"/>
<dbReference type="Pumba" id="Q70JA7"/>
<dbReference type="Antibodypedia" id="25854">
    <property type="antibodies" value="98 antibodies from 24 providers"/>
</dbReference>
<dbReference type="DNASU" id="337876"/>
<dbReference type="Ensembl" id="ENST00000305031.5">
    <property type="protein sequence ID" value="ENSP00000302629.4"/>
    <property type="gene ID" value="ENSG00000198108.4"/>
</dbReference>
<dbReference type="GeneID" id="337876"/>
<dbReference type="KEGG" id="hsa:337876"/>
<dbReference type="MANE-Select" id="ENST00000305031.5">
    <property type="protein sequence ID" value="ENSP00000302629.4"/>
    <property type="RefSeq nucleotide sequence ID" value="NM_175856.5"/>
    <property type="RefSeq protein sequence ID" value="NP_787052.3"/>
</dbReference>
<dbReference type="UCSC" id="uc003kvd.4">
    <property type="organism name" value="human"/>
</dbReference>
<dbReference type="AGR" id="HGNC:24293"/>
<dbReference type="CTD" id="337876"/>
<dbReference type="DisGeNET" id="337876"/>
<dbReference type="GeneCards" id="CHSY3"/>
<dbReference type="HGNC" id="HGNC:24293">
    <property type="gene designation" value="CHSY3"/>
</dbReference>
<dbReference type="HPA" id="ENSG00000198108">
    <property type="expression patterns" value="Tissue enhanced (adipose)"/>
</dbReference>
<dbReference type="MIM" id="609963">
    <property type="type" value="gene"/>
</dbReference>
<dbReference type="neXtProt" id="NX_Q70JA7"/>
<dbReference type="OpenTargets" id="ENSG00000198108"/>
<dbReference type="PharmGKB" id="PA162382259"/>
<dbReference type="VEuPathDB" id="HostDB:ENSG00000198108"/>
<dbReference type="eggNOG" id="KOG3588">
    <property type="taxonomic scope" value="Eukaryota"/>
</dbReference>
<dbReference type="GeneTree" id="ENSGT01050000244857"/>
<dbReference type="HOGENOM" id="CLU_016244_2_0_1"/>
<dbReference type="InParanoid" id="Q70JA7"/>
<dbReference type="OMA" id="CADRVNC"/>
<dbReference type="OrthoDB" id="431432at2759"/>
<dbReference type="PAN-GO" id="Q70JA7">
    <property type="GO annotations" value="2 GO annotations based on evolutionary models"/>
</dbReference>
<dbReference type="PhylomeDB" id="Q70JA7"/>
<dbReference type="TreeFam" id="TF318303"/>
<dbReference type="BioCyc" id="MetaCyc:HS11959-MONOMER"/>
<dbReference type="BRENDA" id="2.4.1.175">
    <property type="organism ID" value="2681"/>
</dbReference>
<dbReference type="PathwayCommons" id="Q70JA7"/>
<dbReference type="Reactome" id="R-HSA-2022870">
    <property type="pathway name" value="Chondroitin sulfate biosynthesis"/>
</dbReference>
<dbReference type="SABIO-RK" id="Q70JA7"/>
<dbReference type="SignaLink" id="Q70JA7"/>
<dbReference type="BioGRID-ORCS" id="337876">
    <property type="hits" value="17 hits in 1151 CRISPR screens"/>
</dbReference>
<dbReference type="ChiTaRS" id="CHSY3">
    <property type="organism name" value="human"/>
</dbReference>
<dbReference type="GenomeRNAi" id="337876"/>
<dbReference type="Pharos" id="Q70JA7">
    <property type="development level" value="Tdark"/>
</dbReference>
<dbReference type="PRO" id="PR:Q70JA7"/>
<dbReference type="Proteomes" id="UP000005640">
    <property type="component" value="Chromosome 5"/>
</dbReference>
<dbReference type="RNAct" id="Q70JA7">
    <property type="molecule type" value="protein"/>
</dbReference>
<dbReference type="Bgee" id="ENSG00000198108">
    <property type="expression patterns" value="Expressed in calcaneal tendon and 143 other cell types or tissues"/>
</dbReference>
<dbReference type="GO" id="GO:0032580">
    <property type="term" value="C:Golgi cisterna membrane"/>
    <property type="evidence" value="ECO:0007669"/>
    <property type="project" value="UniProtKB-SubCell"/>
</dbReference>
<dbReference type="GO" id="GO:0000139">
    <property type="term" value="C:Golgi membrane"/>
    <property type="evidence" value="ECO:0000304"/>
    <property type="project" value="Reactome"/>
</dbReference>
<dbReference type="GO" id="GO:0047238">
    <property type="term" value="F:glucuronosyl-N-acetylgalactosaminyl-proteoglycan 4-beta-N-acetylgalactosaminyltransferase activity"/>
    <property type="evidence" value="ECO:0000318"/>
    <property type="project" value="GO_Central"/>
</dbReference>
<dbReference type="GO" id="GO:0046872">
    <property type="term" value="F:metal ion binding"/>
    <property type="evidence" value="ECO:0007669"/>
    <property type="project" value="UniProtKB-KW"/>
</dbReference>
<dbReference type="GO" id="GO:0050510">
    <property type="term" value="F:N-acetylgalactosaminyl-proteoglycan 3-beta-glucuronosyltransferase activity"/>
    <property type="evidence" value="ECO:0000304"/>
    <property type="project" value="Reactome"/>
</dbReference>
<dbReference type="FunFam" id="3.90.550.10:FF:000060">
    <property type="entry name" value="Hexosyltransferase"/>
    <property type="match status" value="1"/>
</dbReference>
<dbReference type="FunFam" id="3.90.550.50:FF:000004">
    <property type="entry name" value="Hexosyltransferase"/>
    <property type="match status" value="1"/>
</dbReference>
<dbReference type="Gene3D" id="3.90.550.50">
    <property type="match status" value="1"/>
</dbReference>
<dbReference type="Gene3D" id="3.90.550.10">
    <property type="entry name" value="Spore Coat Polysaccharide Biosynthesis Protein SpsA, Chain A"/>
    <property type="match status" value="1"/>
</dbReference>
<dbReference type="InterPro" id="IPR008428">
    <property type="entry name" value="Chond_GalNAc"/>
</dbReference>
<dbReference type="InterPro" id="IPR051227">
    <property type="entry name" value="CS_glycosyltransferase"/>
</dbReference>
<dbReference type="InterPro" id="IPR029044">
    <property type="entry name" value="Nucleotide-diphossugar_trans"/>
</dbReference>
<dbReference type="PANTHER" id="PTHR12369:SF40">
    <property type="entry name" value="CHONDROITIN SULFATE SYNTHASE 3"/>
    <property type="match status" value="1"/>
</dbReference>
<dbReference type="PANTHER" id="PTHR12369">
    <property type="entry name" value="CHONDROITIN SYNTHASE"/>
    <property type="match status" value="1"/>
</dbReference>
<dbReference type="Pfam" id="PF05679">
    <property type="entry name" value="CHGN"/>
    <property type="match status" value="1"/>
</dbReference>
<dbReference type="SUPFAM" id="SSF53448">
    <property type="entry name" value="Nucleotide-diphospho-sugar transferases"/>
    <property type="match status" value="2"/>
</dbReference>
<accession>Q70JA7</accession>
<accession>B2RP97</accession>
<accession>Q76L22</accession>
<accession>Q86Y52</accession>
<protein>
    <recommendedName>
        <fullName>Chondroitin sulfate synthase 3</fullName>
        <ecNumber>2.4.1.175</ecNumber>
        <ecNumber>2.4.1.226</ecNumber>
    </recommendedName>
    <alternativeName>
        <fullName>Carbohydrate synthase 2</fullName>
    </alternativeName>
    <alternativeName>
        <fullName>Chondroitin glucuronyltransferase 3</fullName>
    </alternativeName>
    <alternativeName>
        <fullName>Chondroitin synthase 2</fullName>
        <shortName>ChSy-2</shortName>
    </alternativeName>
    <alternativeName>
        <fullName>Glucuronosyl-N-acetylgalactosaminyl-proteoglycan 4-beta-N-acetylgalactosaminyltransferase II</fullName>
    </alternativeName>
    <alternativeName>
        <fullName>N-acetylgalactosaminyl-proteoglycan 3-beta-glucuronosyltransferase 3</fullName>
    </alternativeName>
    <alternativeName>
        <fullName>N-acetylgalactosaminyltransferase 3</fullName>
    </alternativeName>
</protein>
<comment type="function">
    <text evidence="3">Has both beta-1,3-glucuronic acid and beta-1,4-N-acetylgalactosamine transferase activity. Transfers glucuronic acid (GlcUA) from UDP-GlcUA and N-acetylgalactosamine (GalNAc) from UDP-GalNAc to the non-reducing end of the elongating chondroitin polymer. Specific activity is much reduced compared to CHSY1.</text>
</comment>
<comment type="catalytic activity">
    <reaction>
        <text>3-O-(beta-D-GlcA-(1-&gt;3)-beta-D-GalNAc-(1-&gt;4)-beta-D-GlcA-(1-&gt;3)-beta-D-Gal-(1-&gt;3)-beta-D-Gal-(1-&gt;4)-beta-D-Xyl)-L-seryl-[protein] + UDP-N-acetyl-alpha-D-galactosamine = 3-O-(beta-D-GalNAc-(1-&gt;4)-beta-D-GlcA-(1-&gt;3)-beta-D-GalNAc-(1-&gt;4)-beta-D-GlcA-(1-&gt;3)-beta-D-Gal-(1-&gt;3)-beta-D-Gal-(1-&gt;4)-beta-D-Xyl)-L-seryl-[protein] + UDP + H(+)</text>
        <dbReference type="Rhea" id="RHEA:20800"/>
        <dbReference type="Rhea" id="RHEA-COMP:14058"/>
        <dbReference type="Rhea" id="RHEA-COMP:14059"/>
        <dbReference type="ChEBI" id="CHEBI:15378"/>
        <dbReference type="ChEBI" id="CHEBI:58223"/>
        <dbReference type="ChEBI" id="CHEBI:67138"/>
        <dbReference type="ChEBI" id="CHEBI:138442"/>
        <dbReference type="ChEBI" id="CHEBI:138443"/>
        <dbReference type="EC" id="2.4.1.175"/>
    </reaction>
</comment>
<comment type="catalytic activity">
    <reaction>
        <text>3-O-{beta-D-GlcA-(1-&gt;3)-[beta-D-GalNAc-(1-&gt;4)-beta-D-GlcA-(1-&gt;3)](n)-beta-D-GalNAc-(1-&gt;4)-beta-D-GlcA-(1-&gt;3)-beta-D-Gal-(1-&gt;3)-beta-D-Gal-(1-&gt;4)-beta-D-Xyl}-L-seryl-[protein] + UDP-N-acetyl-alpha-D-galactosamine = 3-O-{[beta-D-GalNAc-(1-&gt;4)-beta-D-GlcA-(1-&gt;3)](n+1)-beta-D-GalNAc-(1-&gt;4)-beta-D-GlcA-(1-&gt;3)-beta-D-Gal-(1-&gt;3)-beta-D-Gal-(1-&gt;4)-beta-D-Xyl}-L-seryl-[protein] + UDP + H(+)</text>
        <dbReference type="Rhea" id="RHEA:55000"/>
        <dbReference type="Rhea" id="RHEA-COMP:14060"/>
        <dbReference type="Rhea" id="RHEA-COMP:14301"/>
        <dbReference type="ChEBI" id="CHEBI:15378"/>
        <dbReference type="ChEBI" id="CHEBI:58223"/>
        <dbReference type="ChEBI" id="CHEBI:67138"/>
        <dbReference type="ChEBI" id="CHEBI:138444"/>
        <dbReference type="ChEBI" id="CHEBI:138445"/>
        <dbReference type="EC" id="2.4.1.175"/>
    </reaction>
</comment>
<comment type="catalytic activity">
    <reaction>
        <text>3-O-(beta-D-GalNAc-(1-&gt;4)-beta-D-GlcA-(1-&gt;3)-beta-D-Gal-(1-&gt;3)-beta-D-Gal-(1-&gt;4)-beta-D-Xyl)-L-seryl-[protein] + UDP-alpha-D-glucuronate = 3-O-(beta-D-GlcA-(1-&gt;3)-beta-D-GalNAc-(1-&gt;4)-beta-D-GlcA-(1-&gt;3)-beta-D-Gal-(1-&gt;3)-beta-D-Gal-(1-&gt;4)-beta-D-Xyl)-L-seryl-[protein] + UDP + H(+)</text>
        <dbReference type="Rhea" id="RHEA:23428"/>
        <dbReference type="Rhea" id="RHEA-COMP:12575"/>
        <dbReference type="Rhea" id="RHEA-COMP:14058"/>
        <dbReference type="ChEBI" id="CHEBI:15378"/>
        <dbReference type="ChEBI" id="CHEBI:58052"/>
        <dbReference type="ChEBI" id="CHEBI:58223"/>
        <dbReference type="ChEBI" id="CHEBI:132105"/>
        <dbReference type="ChEBI" id="CHEBI:138442"/>
        <dbReference type="EC" id="2.4.1.226"/>
    </reaction>
</comment>
<comment type="catalytic activity">
    <reaction>
        <text>3-O-{[beta-D-GalNAc-(1-&gt;4)-beta-D-GlcA-(1-&gt;3)](n)-beta-D-GalNAc-(1-&gt;4)-beta-D-GlcA-(1-&gt;3)-beta-D-Gal-(1-&gt;3)-beta-D-Gal-(1-&gt;4)-beta-D-Xyl}-L-seryl-[protein] + UDP-alpha-D-glucuronate = 3-O-{beta-D-GlcA-(1-&gt;3)-[beta-D-GalNAc-(1-&gt;4)-beta-D-GlcA-(1-&gt;3)](n)-beta-D-GalNAc-(1-&gt;4)-beta-D-GlcA-(1-&gt;3)-beta-D-Gal-(1-&gt;3)-beta-D-Gal-(1-&gt;4)-beta-D-Xyl}-L-seryl-[protein] + UDP + H(+)</text>
        <dbReference type="Rhea" id="RHEA:54996"/>
        <dbReference type="Rhea" id="RHEA-COMP:14060"/>
        <dbReference type="Rhea" id="RHEA-COMP:14061"/>
        <dbReference type="ChEBI" id="CHEBI:15378"/>
        <dbReference type="ChEBI" id="CHEBI:58052"/>
        <dbReference type="ChEBI" id="CHEBI:58223"/>
        <dbReference type="ChEBI" id="CHEBI:138444"/>
        <dbReference type="ChEBI" id="CHEBI:138445"/>
        <dbReference type="EC" id="2.4.1.226"/>
    </reaction>
</comment>
<comment type="cofactor">
    <cofactor evidence="3">
        <name>Co(2+)</name>
        <dbReference type="ChEBI" id="CHEBI:48828"/>
    </cofactor>
    <cofactor evidence="3">
        <name>Mn(2+)</name>
        <dbReference type="ChEBI" id="CHEBI:29035"/>
    </cofactor>
    <cofactor evidence="3">
        <name>Cd(2+)</name>
        <dbReference type="ChEBI" id="CHEBI:48775"/>
    </cofactor>
    <text evidence="3">Divalent metal cations. Highest activities are measured with Co(2+), Mn(2+) and Cd(2+).</text>
</comment>
<comment type="subcellular location">
    <subcellularLocation>
        <location evidence="5">Golgi apparatus</location>
        <location evidence="5">Golgi stack membrane</location>
        <topology evidence="5">Single-pass type II membrane protein</topology>
    </subcellularLocation>
</comment>
<comment type="tissue specificity">
    <text evidence="3">Detected at low levels in brain, cerebral cortex, uterus and small intestine.</text>
</comment>
<comment type="similarity">
    <text evidence="4">Belongs to the chondroitin N-acetylgalactosaminyltransferase family.</text>
</comment>
<comment type="sequence caution" evidence="4">
    <conflict type="erroneous initiation">
        <sequence resource="EMBL-CDS" id="CAD43233"/>
    </conflict>
</comment>
<comment type="online information" name="Functional Glycomics Gateway - GTase">
    <link uri="http://www.functionalglycomics.org/glycomics/molecule/jsp/glycoEnzyme/viewGlycoEnzyme.jsp?gbpId=gt_hum_446"/>
    <text>Chondroitin sulfate synthase 3</text>
</comment>
<feature type="chain" id="PRO_0000189562" description="Chondroitin sulfate synthase 3">
    <location>
        <begin position="1"/>
        <end position="882"/>
    </location>
</feature>
<feature type="topological domain" description="Cytoplasmic" evidence="1">
    <location>
        <begin position="1"/>
        <end position="7"/>
    </location>
</feature>
<feature type="transmembrane region" description="Helical; Signal-anchor for type II membrane protein" evidence="1">
    <location>
        <begin position="8"/>
        <end position="28"/>
    </location>
</feature>
<feature type="topological domain" description="Lumenal" evidence="1">
    <location>
        <begin position="29"/>
        <end position="882"/>
    </location>
</feature>
<feature type="region of interest" description="Disordered" evidence="2">
    <location>
        <begin position="46"/>
        <end position="167"/>
    </location>
</feature>
<feature type="compositionally biased region" description="Low complexity" evidence="2">
    <location>
        <begin position="59"/>
        <end position="69"/>
    </location>
</feature>
<feature type="compositionally biased region" description="Low complexity" evidence="2">
    <location>
        <begin position="120"/>
        <end position="131"/>
    </location>
</feature>
<feature type="binding site" evidence="1">
    <location>
        <position position="720"/>
    </location>
    <ligand>
        <name>a divalent metal cation</name>
        <dbReference type="ChEBI" id="CHEBI:60240"/>
    </ligand>
</feature>
<feature type="binding site" evidence="1">
    <location>
        <position position="834"/>
    </location>
    <ligand>
        <name>a divalent metal cation</name>
        <dbReference type="ChEBI" id="CHEBI:60240"/>
    </ligand>
</feature>
<feature type="glycosylation site" description="N-linked (GlcNAc...) asparagine" evidence="1">
    <location>
        <position position="155"/>
    </location>
</feature>
<feature type="glycosylation site" description="N-linked (GlcNAc...) asparagine" evidence="1">
    <location>
        <position position="279"/>
    </location>
</feature>
<feature type="glycosylation site" description="N-linked (GlcNAc...) asparagine" evidence="1">
    <location>
        <position position="710"/>
    </location>
</feature>
<feature type="glycosylation site" description="N-linked (GlcNAc...) asparagine" evidence="1">
    <location>
        <position position="878"/>
    </location>
</feature>
<feature type="sequence variant" id="VAR_027540" description="In dbSNP:rs10068403.">
    <original>G</original>
    <variation>E</variation>
    <location>
        <position position="615"/>
    </location>
</feature>
<feature type="sequence variant" id="VAR_021174" description="In dbSNP:rs2015018.">
    <original>D</original>
    <variation>G</variation>
    <location>
        <position position="764"/>
    </location>
</feature>
<feature type="sequence conflict" description="In Ref. 2; CAE17326." evidence="4" ref="2">
    <original>L</original>
    <variation>P</variation>
    <location>
        <position position="173"/>
    </location>
</feature>
<feature type="sequence conflict" description="In Ref. 2; CAE17326." evidence="4" ref="2">
    <original>W</original>
    <variation>R</variation>
    <location>
        <position position="195"/>
    </location>
</feature>
<feature type="sequence conflict" description="In Ref. 2; CAE17326." evidence="4" ref="2">
    <original>R</original>
    <variation>H</variation>
    <location>
        <position position="202"/>
    </location>
</feature>
<feature type="sequence conflict" description="In Ref. 2; CAE17326." evidence="4" ref="2">
    <original>G</original>
    <variation>E</variation>
    <location>
        <position position="268"/>
    </location>
</feature>
<feature type="sequence conflict" description="In Ref. 1; BAC98832." evidence="4" ref="1">
    <original>Y</original>
    <variation>H</variation>
    <location>
        <position position="337"/>
    </location>
</feature>
<feature type="sequence conflict" description="In Ref. 1; BAC98832." evidence="4" ref="1">
    <original>GT</original>
    <variation>RA</variation>
    <location>
        <begin position="354"/>
        <end position="355"/>
    </location>
</feature>
<feature type="sequence conflict" description="In Ref. 1; BAC98832." evidence="4" ref="1">
    <original>YE</original>
    <variation>FQ</variation>
    <location>
        <begin position="361"/>
        <end position="362"/>
    </location>
</feature>
<feature type="sequence conflict" description="In Ref. 2; CAD43233/CAE17326." evidence="4" ref="2">
    <original>S</original>
    <variation>N</variation>
    <location>
        <position position="856"/>
    </location>
</feature>
<evidence type="ECO:0000255" key="1"/>
<evidence type="ECO:0000256" key="2">
    <source>
        <dbReference type="SAM" id="MobiDB-lite"/>
    </source>
</evidence>
<evidence type="ECO:0000269" key="3">
    <source>
    </source>
</evidence>
<evidence type="ECO:0000305" key="4"/>
<evidence type="ECO:0000305" key="5">
    <source>
    </source>
</evidence>